<organism>
    <name type="scientific">Yersinia pseudotuberculosis serotype IB (strain PB1/+)</name>
    <dbReference type="NCBI Taxonomy" id="502801"/>
    <lineage>
        <taxon>Bacteria</taxon>
        <taxon>Pseudomonadati</taxon>
        <taxon>Pseudomonadota</taxon>
        <taxon>Gammaproteobacteria</taxon>
        <taxon>Enterobacterales</taxon>
        <taxon>Yersiniaceae</taxon>
        <taxon>Yersinia</taxon>
    </lineage>
</organism>
<keyword id="KW-0963">Cytoplasm</keyword>
<keyword id="KW-0413">Isomerase</keyword>
<keyword id="KW-0627">Porphyrin biosynthesis</keyword>
<keyword id="KW-0663">Pyridoxal phosphate</keyword>
<feature type="chain" id="PRO_1000121933" description="Glutamate-1-semialdehyde 2,1-aminomutase">
    <location>
        <begin position="1"/>
        <end position="426"/>
    </location>
</feature>
<feature type="modified residue" description="N6-(pyridoxal phosphate)lysine" evidence="1">
    <location>
        <position position="265"/>
    </location>
</feature>
<protein>
    <recommendedName>
        <fullName evidence="1">Glutamate-1-semialdehyde 2,1-aminomutase</fullName>
        <shortName evidence="1">GSA</shortName>
        <ecNumber evidence="1">5.4.3.8</ecNumber>
    </recommendedName>
    <alternativeName>
        <fullName evidence="1">Glutamate-1-semialdehyde aminotransferase</fullName>
        <shortName evidence="1">GSA-AT</shortName>
    </alternativeName>
</protein>
<comment type="catalytic activity">
    <reaction evidence="1">
        <text>(S)-4-amino-5-oxopentanoate = 5-aminolevulinate</text>
        <dbReference type="Rhea" id="RHEA:14265"/>
        <dbReference type="ChEBI" id="CHEBI:57501"/>
        <dbReference type="ChEBI" id="CHEBI:356416"/>
        <dbReference type="EC" id="5.4.3.8"/>
    </reaction>
</comment>
<comment type="cofactor">
    <cofactor evidence="1">
        <name>pyridoxal 5'-phosphate</name>
        <dbReference type="ChEBI" id="CHEBI:597326"/>
    </cofactor>
</comment>
<comment type="pathway">
    <text evidence="1">Porphyrin-containing compound metabolism; protoporphyrin-IX biosynthesis; 5-aminolevulinate from L-glutamyl-tRNA(Glu): step 2/2.</text>
</comment>
<comment type="subunit">
    <text evidence="1">Homodimer.</text>
</comment>
<comment type="subcellular location">
    <subcellularLocation>
        <location evidence="1">Cytoplasm</location>
    </subcellularLocation>
</comment>
<comment type="similarity">
    <text evidence="1">Belongs to the class-III pyridoxal-phosphate-dependent aminotransferase family. HemL subfamily.</text>
</comment>
<proteinExistence type="inferred from homology"/>
<accession>B2K547</accession>
<reference key="1">
    <citation type="submission" date="2008-04" db="EMBL/GenBank/DDBJ databases">
        <title>Complete sequence of Yersinia pseudotuberculosis PB1/+.</title>
        <authorList>
            <person name="Copeland A."/>
            <person name="Lucas S."/>
            <person name="Lapidus A."/>
            <person name="Glavina del Rio T."/>
            <person name="Dalin E."/>
            <person name="Tice H."/>
            <person name="Bruce D."/>
            <person name="Goodwin L."/>
            <person name="Pitluck S."/>
            <person name="Munk A.C."/>
            <person name="Brettin T."/>
            <person name="Detter J.C."/>
            <person name="Han C."/>
            <person name="Tapia R."/>
            <person name="Schmutz J."/>
            <person name="Larimer F."/>
            <person name="Land M."/>
            <person name="Hauser L."/>
            <person name="Challacombe J.F."/>
            <person name="Green L."/>
            <person name="Lindler L.E."/>
            <person name="Nikolich M.P."/>
            <person name="Richardson P."/>
        </authorList>
    </citation>
    <scope>NUCLEOTIDE SEQUENCE [LARGE SCALE GENOMIC DNA]</scope>
    <source>
        <strain>PB1/+</strain>
    </source>
</reference>
<name>GSA_YERPB</name>
<dbReference type="EC" id="5.4.3.8" evidence="1"/>
<dbReference type="EMBL" id="CP001048">
    <property type="protein sequence ID" value="ACC87758.1"/>
    <property type="molecule type" value="Genomic_DNA"/>
</dbReference>
<dbReference type="RefSeq" id="WP_011191761.1">
    <property type="nucleotide sequence ID" value="NZ_CP009780.1"/>
</dbReference>
<dbReference type="SMR" id="B2K547"/>
<dbReference type="GeneID" id="49787253"/>
<dbReference type="KEGG" id="ypb:YPTS_0774"/>
<dbReference type="PATRIC" id="fig|502801.10.peg.106"/>
<dbReference type="UniPathway" id="UPA00251">
    <property type="reaction ID" value="UER00317"/>
</dbReference>
<dbReference type="GO" id="GO:0005737">
    <property type="term" value="C:cytoplasm"/>
    <property type="evidence" value="ECO:0007669"/>
    <property type="project" value="UniProtKB-SubCell"/>
</dbReference>
<dbReference type="GO" id="GO:0042286">
    <property type="term" value="F:glutamate-1-semialdehyde 2,1-aminomutase activity"/>
    <property type="evidence" value="ECO:0007669"/>
    <property type="project" value="UniProtKB-UniRule"/>
</dbReference>
<dbReference type="GO" id="GO:0030170">
    <property type="term" value="F:pyridoxal phosphate binding"/>
    <property type="evidence" value="ECO:0007669"/>
    <property type="project" value="InterPro"/>
</dbReference>
<dbReference type="GO" id="GO:0008483">
    <property type="term" value="F:transaminase activity"/>
    <property type="evidence" value="ECO:0007669"/>
    <property type="project" value="InterPro"/>
</dbReference>
<dbReference type="GO" id="GO:0006782">
    <property type="term" value="P:protoporphyrinogen IX biosynthetic process"/>
    <property type="evidence" value="ECO:0007669"/>
    <property type="project" value="UniProtKB-UniRule"/>
</dbReference>
<dbReference type="CDD" id="cd00610">
    <property type="entry name" value="OAT_like"/>
    <property type="match status" value="1"/>
</dbReference>
<dbReference type="FunFam" id="3.40.640.10:FF:000021">
    <property type="entry name" value="Glutamate-1-semialdehyde 2,1-aminomutase"/>
    <property type="match status" value="1"/>
</dbReference>
<dbReference type="FunFam" id="3.90.1150.10:FF:000012">
    <property type="entry name" value="Glutamate-1-semialdehyde 2,1-aminomutase"/>
    <property type="match status" value="1"/>
</dbReference>
<dbReference type="Gene3D" id="3.90.1150.10">
    <property type="entry name" value="Aspartate Aminotransferase, domain 1"/>
    <property type="match status" value="1"/>
</dbReference>
<dbReference type="Gene3D" id="3.40.640.10">
    <property type="entry name" value="Type I PLP-dependent aspartate aminotransferase-like (Major domain)"/>
    <property type="match status" value="1"/>
</dbReference>
<dbReference type="HAMAP" id="MF_00375">
    <property type="entry name" value="HemL_aminotrans_3"/>
    <property type="match status" value="1"/>
</dbReference>
<dbReference type="InterPro" id="IPR004639">
    <property type="entry name" value="4pyrrol_synth_GluAld_NH2Trfase"/>
</dbReference>
<dbReference type="InterPro" id="IPR005814">
    <property type="entry name" value="Aminotrans_3"/>
</dbReference>
<dbReference type="InterPro" id="IPR049704">
    <property type="entry name" value="Aminotrans_3_PPA_site"/>
</dbReference>
<dbReference type="InterPro" id="IPR015424">
    <property type="entry name" value="PyrdxlP-dep_Trfase"/>
</dbReference>
<dbReference type="InterPro" id="IPR015421">
    <property type="entry name" value="PyrdxlP-dep_Trfase_major"/>
</dbReference>
<dbReference type="InterPro" id="IPR015422">
    <property type="entry name" value="PyrdxlP-dep_Trfase_small"/>
</dbReference>
<dbReference type="NCBIfam" id="TIGR00713">
    <property type="entry name" value="hemL"/>
    <property type="match status" value="1"/>
</dbReference>
<dbReference type="NCBIfam" id="NF000818">
    <property type="entry name" value="PRK00062.1"/>
    <property type="match status" value="1"/>
</dbReference>
<dbReference type="PANTHER" id="PTHR43713">
    <property type="entry name" value="GLUTAMATE-1-SEMIALDEHYDE 2,1-AMINOMUTASE"/>
    <property type="match status" value="1"/>
</dbReference>
<dbReference type="PANTHER" id="PTHR43713:SF3">
    <property type="entry name" value="GLUTAMATE-1-SEMIALDEHYDE 2,1-AMINOMUTASE 1, CHLOROPLASTIC-RELATED"/>
    <property type="match status" value="1"/>
</dbReference>
<dbReference type="Pfam" id="PF00202">
    <property type="entry name" value="Aminotran_3"/>
    <property type="match status" value="1"/>
</dbReference>
<dbReference type="SUPFAM" id="SSF53383">
    <property type="entry name" value="PLP-dependent transferases"/>
    <property type="match status" value="1"/>
</dbReference>
<dbReference type="PROSITE" id="PS00600">
    <property type="entry name" value="AA_TRANSFER_CLASS_3"/>
    <property type="match status" value="1"/>
</dbReference>
<evidence type="ECO:0000255" key="1">
    <source>
        <dbReference type="HAMAP-Rule" id="MF_00375"/>
    </source>
</evidence>
<sequence>MSKSENLYAQAQQLIPGGVNSPVRAFTGVGGIPLFIERADGAYLFDVDGKAYIDYVGSWGPMILGHNHPAIRQAVIEAVERGLSFGAPTEMEVKMAQLVTDLVPTMDMVRMVNSGTEATMSAIRLARGYTGRDKIIKFEGCYHGHADCLLVKAGSGALTLGQPNSPGVPADFAKHTLTCTYNDLASVRQAFEQYPQEVACIIVEPVAGNMNCIPPLPEFLPGLRALCDEFGALLIIDEVMTGFRVALAGAQDYYHVIPDLTCLGKIIGGGMPVGAFGGRREVMNALAPTGPVYQAGTLSGNPIAMAAGFACLTEISQVGVYETLTELTDSLATGLRHAAKEENIPLVVNHVGGMFGLFFTNADTVTCYQDVMNCDVERFKRFFHLMLEEGVYLAPSAFEAGFMSLAHSNEDIQKTVNAARRCFAKL</sequence>
<gene>
    <name evidence="1" type="primary">hemL</name>
    <name type="ordered locus">YPTS_0774</name>
</gene>